<organism>
    <name type="scientific">Pseudomonas paraeruginosa (strain DSM 24068 / PA7)</name>
    <name type="common">Pseudomonas aeruginosa (strain PA7)</name>
    <dbReference type="NCBI Taxonomy" id="381754"/>
    <lineage>
        <taxon>Bacteria</taxon>
        <taxon>Pseudomonadati</taxon>
        <taxon>Pseudomonadota</taxon>
        <taxon>Gammaproteobacteria</taxon>
        <taxon>Pseudomonadales</taxon>
        <taxon>Pseudomonadaceae</taxon>
        <taxon>Pseudomonas</taxon>
        <taxon>Pseudomonas paraeruginosa</taxon>
    </lineage>
</organism>
<evidence type="ECO:0000255" key="1">
    <source>
        <dbReference type="HAMAP-Rule" id="MF_01164"/>
    </source>
</evidence>
<reference key="1">
    <citation type="submission" date="2007-06" db="EMBL/GenBank/DDBJ databases">
        <authorList>
            <person name="Dodson R.J."/>
            <person name="Harkins D."/>
            <person name="Paulsen I.T."/>
        </authorList>
    </citation>
    <scope>NUCLEOTIDE SEQUENCE [LARGE SCALE GENOMIC DNA]</scope>
    <source>
        <strain>DSM 24068 / PA7</strain>
    </source>
</reference>
<keyword id="KW-0046">Antibiotic resistance</keyword>
<keyword id="KW-0997">Cell inner membrane</keyword>
<keyword id="KW-1003">Cell membrane</keyword>
<keyword id="KW-0328">Glycosyltransferase</keyword>
<keyword id="KW-0441">Lipid A biosynthesis</keyword>
<keyword id="KW-0444">Lipid biosynthesis</keyword>
<keyword id="KW-0443">Lipid metabolism</keyword>
<keyword id="KW-0448">Lipopolysaccharide biosynthesis</keyword>
<keyword id="KW-0472">Membrane</keyword>
<keyword id="KW-0808">Transferase</keyword>
<keyword id="KW-0812">Transmembrane</keyword>
<keyword id="KW-1133">Transmembrane helix</keyword>
<accession>A6V1P1</accession>
<sequence>MKPYPIDLVSVVIPVYNEEASLPELLRRTEAACRSLGRAFEIVLVDDGSRDRSAELLQAAAERDGCAVVAVILNRNYGQHAAILAGFEQSRGDLVITLDADLQNPPEEIPRLVERAAQGYDVVGSIRDNRRDSAWRRWPSRLVNLAVQRSTGVAMHDYGCMLRAYRRSIVEAMLACRERSTFIPILANGFARHTCEIRVAHAERAHGESKYSAMRLLNLMFDLVTCMTTTPLRLLSLVGGGMALAGFLFALFLLVLRLAFGAAWAGNGLFVLFAVLFMFSGVQLLGMGLLGEYLGRMYSDVRARPRFFIERVVRAAPSALPSALQRAGFTSSSSEPSTP</sequence>
<name>ARNC_PSEP7</name>
<protein>
    <recommendedName>
        <fullName evidence="1">Undecaprenyl-phosphate 4-deoxy-4-formamido-L-arabinose transferase</fullName>
        <ecNumber evidence="1">2.4.2.53</ecNumber>
    </recommendedName>
    <alternativeName>
        <fullName evidence="1">Undecaprenyl-phosphate Ara4FN transferase</fullName>
        <shortName evidence="1">Ara4FN transferase</shortName>
    </alternativeName>
</protein>
<comment type="function">
    <text evidence="1">Catalyzes the transfer of 4-deoxy-4-formamido-L-arabinose from UDP to undecaprenyl phosphate. The modified arabinose is attached to lipid A and is required for resistance to polymyxin and cationic antimicrobial peptides.</text>
</comment>
<comment type="catalytic activity">
    <reaction evidence="1">
        <text>UDP-4-deoxy-4-formamido-beta-L-arabinose + di-trans,octa-cis-undecaprenyl phosphate = 4-deoxy-4-formamido-alpha-L-arabinopyranosyl di-trans,octa-cis-undecaprenyl phosphate + UDP</text>
        <dbReference type="Rhea" id="RHEA:27722"/>
        <dbReference type="ChEBI" id="CHEBI:58223"/>
        <dbReference type="ChEBI" id="CHEBI:58709"/>
        <dbReference type="ChEBI" id="CHEBI:58909"/>
        <dbReference type="ChEBI" id="CHEBI:60392"/>
        <dbReference type="EC" id="2.4.2.53"/>
    </reaction>
</comment>
<comment type="pathway">
    <text evidence="1">Glycolipid biosynthesis; 4-amino-4-deoxy-alpha-L-arabinose undecaprenyl phosphate biosynthesis; 4-amino-4-deoxy-alpha-L-arabinose undecaprenyl phosphate from UDP-4-deoxy-4-formamido-beta-L-arabinose and undecaprenyl phosphate: step 1/2.</text>
</comment>
<comment type="pathway">
    <text evidence="1">Bacterial outer membrane biogenesis; lipopolysaccharide biosynthesis.</text>
</comment>
<comment type="subcellular location">
    <subcellularLocation>
        <location evidence="1">Cell inner membrane</location>
        <topology evidence="1">Multi-pass membrane protein</topology>
    </subcellularLocation>
</comment>
<comment type="similarity">
    <text evidence="1">Belongs to the glycosyltransferase 2 family.</text>
</comment>
<dbReference type="EC" id="2.4.2.53" evidence="1"/>
<dbReference type="EMBL" id="CP000744">
    <property type="protein sequence ID" value="ABR82378.1"/>
    <property type="molecule type" value="Genomic_DNA"/>
</dbReference>
<dbReference type="RefSeq" id="WP_012074759.1">
    <property type="nucleotide sequence ID" value="NC_009656.1"/>
</dbReference>
<dbReference type="SMR" id="A6V1P1"/>
<dbReference type="CAZy" id="GT2">
    <property type="family name" value="Glycosyltransferase Family 2"/>
</dbReference>
<dbReference type="KEGG" id="pap:PSPA7_1592"/>
<dbReference type="HOGENOM" id="CLU_033536_0_0_6"/>
<dbReference type="UniPathway" id="UPA00030"/>
<dbReference type="UniPathway" id="UPA00036">
    <property type="reaction ID" value="UER00495"/>
</dbReference>
<dbReference type="Proteomes" id="UP000001582">
    <property type="component" value="Chromosome"/>
</dbReference>
<dbReference type="GO" id="GO:0005886">
    <property type="term" value="C:plasma membrane"/>
    <property type="evidence" value="ECO:0007669"/>
    <property type="project" value="UniProtKB-SubCell"/>
</dbReference>
<dbReference type="GO" id="GO:0016780">
    <property type="term" value="F:phosphotransferase activity, for other substituted phosphate groups"/>
    <property type="evidence" value="ECO:0007669"/>
    <property type="project" value="UniProtKB-UniRule"/>
</dbReference>
<dbReference type="GO" id="GO:0099621">
    <property type="term" value="F:undecaprenyl-phosphate 4-deoxy-4-formamido-L-arabinose transferase activity"/>
    <property type="evidence" value="ECO:0007669"/>
    <property type="project" value="UniProtKB-EC"/>
</dbReference>
<dbReference type="GO" id="GO:0036108">
    <property type="term" value="P:4-amino-4-deoxy-alpha-L-arabinopyranosyl undecaprenyl phosphate biosynthetic process"/>
    <property type="evidence" value="ECO:0007669"/>
    <property type="project" value="UniProtKB-UniRule"/>
</dbReference>
<dbReference type="GO" id="GO:0009245">
    <property type="term" value="P:lipid A biosynthetic process"/>
    <property type="evidence" value="ECO:0007669"/>
    <property type="project" value="UniProtKB-UniRule"/>
</dbReference>
<dbReference type="GO" id="GO:0009103">
    <property type="term" value="P:lipopolysaccharide biosynthetic process"/>
    <property type="evidence" value="ECO:0007669"/>
    <property type="project" value="UniProtKB-UniRule"/>
</dbReference>
<dbReference type="GO" id="GO:0046677">
    <property type="term" value="P:response to antibiotic"/>
    <property type="evidence" value="ECO:0007669"/>
    <property type="project" value="UniProtKB-KW"/>
</dbReference>
<dbReference type="CDD" id="cd04187">
    <property type="entry name" value="DPM1_like_bac"/>
    <property type="match status" value="1"/>
</dbReference>
<dbReference type="FunFam" id="3.90.550.10:FF:000019">
    <property type="entry name" value="Undecaprenyl-phosphate 4-deoxy-4-formamido-L-arabinose transferase"/>
    <property type="match status" value="1"/>
</dbReference>
<dbReference type="Gene3D" id="3.90.550.10">
    <property type="entry name" value="Spore Coat Polysaccharide Biosynthesis Protein SpsA, Chain A"/>
    <property type="match status" value="1"/>
</dbReference>
<dbReference type="HAMAP" id="MF_01164">
    <property type="entry name" value="ArnC_transfer"/>
    <property type="match status" value="1"/>
</dbReference>
<dbReference type="InterPro" id="IPR022857">
    <property type="entry name" value="ArnC_tfrase"/>
</dbReference>
<dbReference type="InterPro" id="IPR001173">
    <property type="entry name" value="Glyco_trans_2-like"/>
</dbReference>
<dbReference type="InterPro" id="IPR050256">
    <property type="entry name" value="Glycosyltransferase_2"/>
</dbReference>
<dbReference type="InterPro" id="IPR029044">
    <property type="entry name" value="Nucleotide-diphossugar_trans"/>
</dbReference>
<dbReference type="NCBIfam" id="NF007986">
    <property type="entry name" value="PRK10714.1"/>
    <property type="match status" value="1"/>
</dbReference>
<dbReference type="PANTHER" id="PTHR48090:SF3">
    <property type="entry name" value="UNDECAPRENYL-PHOSPHATE 4-DEOXY-4-FORMAMIDO-L-ARABINOSE TRANSFERASE"/>
    <property type="match status" value="1"/>
</dbReference>
<dbReference type="PANTHER" id="PTHR48090">
    <property type="entry name" value="UNDECAPRENYL-PHOSPHATE 4-DEOXY-4-FORMAMIDO-L-ARABINOSE TRANSFERASE-RELATED"/>
    <property type="match status" value="1"/>
</dbReference>
<dbReference type="Pfam" id="PF00535">
    <property type="entry name" value="Glycos_transf_2"/>
    <property type="match status" value="1"/>
</dbReference>
<dbReference type="SUPFAM" id="SSF53448">
    <property type="entry name" value="Nucleotide-diphospho-sugar transferases"/>
    <property type="match status" value="1"/>
</dbReference>
<gene>
    <name evidence="1" type="primary">arnC</name>
    <name type="ordered locus">PSPA7_1592</name>
</gene>
<feature type="chain" id="PRO_0000380265" description="Undecaprenyl-phosphate 4-deoxy-4-formamido-L-arabinose transferase">
    <location>
        <begin position="1"/>
        <end position="339"/>
    </location>
</feature>
<feature type="transmembrane region" description="Helical" evidence="1">
    <location>
        <begin position="235"/>
        <end position="255"/>
    </location>
</feature>
<feature type="transmembrane region" description="Helical" evidence="1">
    <location>
        <begin position="269"/>
        <end position="289"/>
    </location>
</feature>
<proteinExistence type="inferred from homology"/>